<comment type="function">
    <text evidence="1">Negative regulator of class I heat shock genes (grpE-dnaK-dnaJ and groELS operons). Prevents heat-shock induction of these operons.</text>
</comment>
<comment type="similarity">
    <text evidence="1">Belongs to the HrcA family.</text>
</comment>
<gene>
    <name evidence="1" type="primary">hrcA</name>
    <name type="ordered locus">R00377</name>
    <name type="ORF">SMc01143</name>
</gene>
<protein>
    <recommendedName>
        <fullName evidence="1">Heat-inducible transcription repressor HrcA</fullName>
    </recommendedName>
</protein>
<name>HRCA_RHIME</name>
<sequence>MVLRNPGTKGIASALDERSGEIFRRIVESYLESGEPLGSRNLSRLLPVSLSPASVRNVMSDLEDLGLIYSPHVSAGRLPTQLGLRFFVDAFMQVGNLSPEERASIERQVHPGNRDRSVENLLTEASQMLSGMSRGAGLVITTKSDPVLKHVEFIRLAPTKALAVLVGEHDQVENRIIELPAGITSAQLTEAANFVNAHLAGQTIPELRTQLEKVKETVRGELDALSQDLVERGLAIWSGSEGDGQPARLIVRGRANLLEGLEGTDDIERLRMLFDDLEKKDSLIEILNLAESGPGVRIFIGSENKLFSLSGSSLIVAPYRDSDDRIVGAVGVIGPTRLNYSRIVPMVDYTAQLMSRLSR</sequence>
<organism>
    <name type="scientific">Rhizobium meliloti (strain 1021)</name>
    <name type="common">Ensifer meliloti</name>
    <name type="synonym">Sinorhizobium meliloti</name>
    <dbReference type="NCBI Taxonomy" id="266834"/>
    <lineage>
        <taxon>Bacteria</taxon>
        <taxon>Pseudomonadati</taxon>
        <taxon>Pseudomonadota</taxon>
        <taxon>Alphaproteobacteria</taxon>
        <taxon>Hyphomicrobiales</taxon>
        <taxon>Rhizobiaceae</taxon>
        <taxon>Sinorhizobium/Ensifer group</taxon>
        <taxon>Sinorhizobium</taxon>
    </lineage>
</organism>
<dbReference type="EMBL" id="AL591688">
    <property type="protein sequence ID" value="CAC41814.1"/>
    <property type="molecule type" value="Genomic_DNA"/>
</dbReference>
<dbReference type="RefSeq" id="NP_384483.1">
    <property type="nucleotide sequence ID" value="NC_003047.1"/>
</dbReference>
<dbReference type="RefSeq" id="WP_003527730.1">
    <property type="nucleotide sequence ID" value="NC_003047.1"/>
</dbReference>
<dbReference type="SMR" id="Q92SK1"/>
<dbReference type="EnsemblBacteria" id="CAC41814">
    <property type="protein sequence ID" value="CAC41814"/>
    <property type="gene ID" value="SMc01143"/>
</dbReference>
<dbReference type="GeneID" id="89574706"/>
<dbReference type="KEGG" id="sme:SMc01143"/>
<dbReference type="PATRIC" id="fig|266834.11.peg.1749"/>
<dbReference type="eggNOG" id="COG1420">
    <property type="taxonomic scope" value="Bacteria"/>
</dbReference>
<dbReference type="HOGENOM" id="CLU_050019_0_0_5"/>
<dbReference type="OrthoDB" id="9783139at2"/>
<dbReference type="Proteomes" id="UP000001976">
    <property type="component" value="Chromosome"/>
</dbReference>
<dbReference type="GO" id="GO:0003677">
    <property type="term" value="F:DNA binding"/>
    <property type="evidence" value="ECO:0007669"/>
    <property type="project" value="InterPro"/>
</dbReference>
<dbReference type="GO" id="GO:0045892">
    <property type="term" value="P:negative regulation of DNA-templated transcription"/>
    <property type="evidence" value="ECO:0007669"/>
    <property type="project" value="UniProtKB-UniRule"/>
</dbReference>
<dbReference type="Gene3D" id="3.30.450.40">
    <property type="match status" value="1"/>
</dbReference>
<dbReference type="Gene3D" id="3.30.390.60">
    <property type="entry name" value="Heat-inducible transcription repressor hrca homolog, domain 3"/>
    <property type="match status" value="1"/>
</dbReference>
<dbReference type="Gene3D" id="1.10.10.10">
    <property type="entry name" value="Winged helix-like DNA-binding domain superfamily/Winged helix DNA-binding domain"/>
    <property type="match status" value="1"/>
</dbReference>
<dbReference type="HAMAP" id="MF_00081">
    <property type="entry name" value="HrcA"/>
    <property type="match status" value="1"/>
</dbReference>
<dbReference type="InterPro" id="IPR029016">
    <property type="entry name" value="GAF-like_dom_sf"/>
</dbReference>
<dbReference type="InterPro" id="IPR002571">
    <property type="entry name" value="HrcA"/>
</dbReference>
<dbReference type="InterPro" id="IPR021153">
    <property type="entry name" value="HrcA_C"/>
</dbReference>
<dbReference type="InterPro" id="IPR036388">
    <property type="entry name" value="WH-like_DNA-bd_sf"/>
</dbReference>
<dbReference type="InterPro" id="IPR036390">
    <property type="entry name" value="WH_DNA-bd_sf"/>
</dbReference>
<dbReference type="InterPro" id="IPR023120">
    <property type="entry name" value="WHTH_transcript_rep_HrcA_IDD"/>
</dbReference>
<dbReference type="NCBIfam" id="TIGR00331">
    <property type="entry name" value="hrcA"/>
    <property type="match status" value="1"/>
</dbReference>
<dbReference type="PANTHER" id="PTHR34824">
    <property type="entry name" value="HEAT-INDUCIBLE TRANSCRIPTION REPRESSOR HRCA"/>
    <property type="match status" value="1"/>
</dbReference>
<dbReference type="PANTHER" id="PTHR34824:SF1">
    <property type="entry name" value="HEAT-INDUCIBLE TRANSCRIPTION REPRESSOR HRCA"/>
    <property type="match status" value="1"/>
</dbReference>
<dbReference type="Pfam" id="PF01628">
    <property type="entry name" value="HrcA"/>
    <property type="match status" value="1"/>
</dbReference>
<dbReference type="PIRSF" id="PIRSF005485">
    <property type="entry name" value="HrcA"/>
    <property type="match status" value="1"/>
</dbReference>
<dbReference type="SUPFAM" id="SSF55781">
    <property type="entry name" value="GAF domain-like"/>
    <property type="match status" value="1"/>
</dbReference>
<dbReference type="SUPFAM" id="SSF46785">
    <property type="entry name" value="Winged helix' DNA-binding domain"/>
    <property type="match status" value="1"/>
</dbReference>
<proteinExistence type="inferred from homology"/>
<keyword id="KW-1185">Reference proteome</keyword>
<keyword id="KW-0678">Repressor</keyword>
<keyword id="KW-0346">Stress response</keyword>
<keyword id="KW-0804">Transcription</keyword>
<keyword id="KW-0805">Transcription regulation</keyword>
<feature type="chain" id="PRO_0000182523" description="Heat-inducible transcription repressor HrcA">
    <location>
        <begin position="1"/>
        <end position="359"/>
    </location>
</feature>
<accession>Q92SK1</accession>
<evidence type="ECO:0000255" key="1">
    <source>
        <dbReference type="HAMAP-Rule" id="MF_00081"/>
    </source>
</evidence>
<reference key="1">
    <citation type="journal article" date="2001" name="Proc. Natl. Acad. Sci. U.S.A.">
        <title>Analysis of the chromosome sequence of the legume symbiont Sinorhizobium meliloti strain 1021.</title>
        <authorList>
            <person name="Capela D."/>
            <person name="Barloy-Hubler F."/>
            <person name="Gouzy J."/>
            <person name="Bothe G."/>
            <person name="Ampe F."/>
            <person name="Batut J."/>
            <person name="Boistard P."/>
            <person name="Becker A."/>
            <person name="Boutry M."/>
            <person name="Cadieu E."/>
            <person name="Dreano S."/>
            <person name="Gloux S."/>
            <person name="Godrie T."/>
            <person name="Goffeau A."/>
            <person name="Kahn D."/>
            <person name="Kiss E."/>
            <person name="Lelaure V."/>
            <person name="Masuy D."/>
            <person name="Pohl T."/>
            <person name="Portetelle D."/>
            <person name="Puehler A."/>
            <person name="Purnelle B."/>
            <person name="Ramsperger U."/>
            <person name="Renard C."/>
            <person name="Thebault P."/>
            <person name="Vandenbol M."/>
            <person name="Weidner S."/>
            <person name="Galibert F."/>
        </authorList>
    </citation>
    <scope>NUCLEOTIDE SEQUENCE [LARGE SCALE GENOMIC DNA]</scope>
    <source>
        <strain>1021</strain>
    </source>
</reference>
<reference key="2">
    <citation type="journal article" date="2001" name="Science">
        <title>The composite genome of the legume symbiont Sinorhizobium meliloti.</title>
        <authorList>
            <person name="Galibert F."/>
            <person name="Finan T.M."/>
            <person name="Long S.R."/>
            <person name="Puehler A."/>
            <person name="Abola P."/>
            <person name="Ampe F."/>
            <person name="Barloy-Hubler F."/>
            <person name="Barnett M.J."/>
            <person name="Becker A."/>
            <person name="Boistard P."/>
            <person name="Bothe G."/>
            <person name="Boutry M."/>
            <person name="Bowser L."/>
            <person name="Buhrmester J."/>
            <person name="Cadieu E."/>
            <person name="Capela D."/>
            <person name="Chain P."/>
            <person name="Cowie A."/>
            <person name="Davis R.W."/>
            <person name="Dreano S."/>
            <person name="Federspiel N.A."/>
            <person name="Fisher R.F."/>
            <person name="Gloux S."/>
            <person name="Godrie T."/>
            <person name="Goffeau A."/>
            <person name="Golding B."/>
            <person name="Gouzy J."/>
            <person name="Gurjal M."/>
            <person name="Hernandez-Lucas I."/>
            <person name="Hong A."/>
            <person name="Huizar L."/>
            <person name="Hyman R.W."/>
            <person name="Jones T."/>
            <person name="Kahn D."/>
            <person name="Kahn M.L."/>
            <person name="Kalman S."/>
            <person name="Keating D.H."/>
            <person name="Kiss E."/>
            <person name="Komp C."/>
            <person name="Lelaure V."/>
            <person name="Masuy D."/>
            <person name="Palm C."/>
            <person name="Peck M.C."/>
            <person name="Pohl T.M."/>
            <person name="Portetelle D."/>
            <person name="Purnelle B."/>
            <person name="Ramsperger U."/>
            <person name="Surzycki R."/>
            <person name="Thebault P."/>
            <person name="Vandenbol M."/>
            <person name="Vorhoelter F.J."/>
            <person name="Weidner S."/>
            <person name="Wells D.H."/>
            <person name="Wong K."/>
            <person name="Yeh K.-C."/>
            <person name="Batut J."/>
        </authorList>
    </citation>
    <scope>NUCLEOTIDE SEQUENCE [LARGE SCALE GENOMIC DNA]</scope>
    <source>
        <strain>1021</strain>
    </source>
</reference>